<proteinExistence type="evidence at protein level"/>
<reference key="1">
    <citation type="journal article" date="2001" name="Plant Cell">
        <title>A novel UDP-glucose transferase is part of the callose synthase complex and interacts with phragmoplastin at the forming cell plate.</title>
        <authorList>
            <person name="Hong Z."/>
            <person name="Zhang Z."/>
            <person name="Olson J.M."/>
            <person name="Verma D.P.S."/>
        </authorList>
    </citation>
    <scope>NUCLEOTIDE SEQUENCE [MRNA]</scope>
    <scope>SUBCELLULAR LOCATION</scope>
    <scope>INTERACTION WITH CALS1; ROP1 AND PHRAGMOPLASTIN</scope>
    <source>
        <strain>cv. Columbia</strain>
    </source>
</reference>
<reference key="2">
    <citation type="journal article" date="2000" name="Nature">
        <title>Sequence and analysis of chromosome 1 of the plant Arabidopsis thaliana.</title>
        <authorList>
            <person name="Theologis A."/>
            <person name="Ecker J.R."/>
            <person name="Palm C.J."/>
            <person name="Federspiel N.A."/>
            <person name="Kaul S."/>
            <person name="White O."/>
            <person name="Alonso J."/>
            <person name="Altafi H."/>
            <person name="Araujo R."/>
            <person name="Bowman C.L."/>
            <person name="Brooks S.Y."/>
            <person name="Buehler E."/>
            <person name="Chan A."/>
            <person name="Chao Q."/>
            <person name="Chen H."/>
            <person name="Cheuk R.F."/>
            <person name="Chin C.W."/>
            <person name="Chung M.K."/>
            <person name="Conn L."/>
            <person name="Conway A.B."/>
            <person name="Conway A.R."/>
            <person name="Creasy T.H."/>
            <person name="Dewar K."/>
            <person name="Dunn P."/>
            <person name="Etgu P."/>
            <person name="Feldblyum T.V."/>
            <person name="Feng J.-D."/>
            <person name="Fong B."/>
            <person name="Fujii C.Y."/>
            <person name="Gill J.E."/>
            <person name="Goldsmith A.D."/>
            <person name="Haas B."/>
            <person name="Hansen N.F."/>
            <person name="Hughes B."/>
            <person name="Huizar L."/>
            <person name="Hunter J.L."/>
            <person name="Jenkins J."/>
            <person name="Johnson-Hopson C."/>
            <person name="Khan S."/>
            <person name="Khaykin E."/>
            <person name="Kim C.J."/>
            <person name="Koo H.L."/>
            <person name="Kremenetskaia I."/>
            <person name="Kurtz D.B."/>
            <person name="Kwan A."/>
            <person name="Lam B."/>
            <person name="Langin-Hooper S."/>
            <person name="Lee A."/>
            <person name="Lee J.M."/>
            <person name="Lenz C.A."/>
            <person name="Li J.H."/>
            <person name="Li Y.-P."/>
            <person name="Lin X."/>
            <person name="Liu S.X."/>
            <person name="Liu Z.A."/>
            <person name="Luros J.S."/>
            <person name="Maiti R."/>
            <person name="Marziali A."/>
            <person name="Militscher J."/>
            <person name="Miranda M."/>
            <person name="Nguyen M."/>
            <person name="Nierman W.C."/>
            <person name="Osborne B.I."/>
            <person name="Pai G."/>
            <person name="Peterson J."/>
            <person name="Pham P.K."/>
            <person name="Rizzo M."/>
            <person name="Rooney T."/>
            <person name="Rowley D."/>
            <person name="Sakano H."/>
            <person name="Salzberg S.L."/>
            <person name="Schwartz J.R."/>
            <person name="Shinn P."/>
            <person name="Southwick A.M."/>
            <person name="Sun H."/>
            <person name="Tallon L.J."/>
            <person name="Tambunga G."/>
            <person name="Toriumi M.J."/>
            <person name="Town C.D."/>
            <person name="Utterback T."/>
            <person name="Van Aken S."/>
            <person name="Vaysberg M."/>
            <person name="Vysotskaia V.S."/>
            <person name="Walker M."/>
            <person name="Wu D."/>
            <person name="Yu G."/>
            <person name="Fraser C.M."/>
            <person name="Venter J.C."/>
            <person name="Davis R.W."/>
        </authorList>
    </citation>
    <scope>NUCLEOTIDE SEQUENCE [LARGE SCALE GENOMIC DNA]</scope>
    <source>
        <strain>cv. Columbia</strain>
    </source>
</reference>
<reference key="3">
    <citation type="journal article" date="2017" name="Plant J.">
        <title>Araport11: a complete reannotation of the Arabidopsis thaliana reference genome.</title>
        <authorList>
            <person name="Cheng C.Y."/>
            <person name="Krishnakumar V."/>
            <person name="Chan A.P."/>
            <person name="Thibaud-Nissen F."/>
            <person name="Schobel S."/>
            <person name="Town C.D."/>
        </authorList>
    </citation>
    <scope>GENOME REANNOTATION</scope>
    <source>
        <strain>cv. Columbia</strain>
    </source>
</reference>
<reference key="4">
    <citation type="journal article" date="2003" name="Science">
        <title>Empirical analysis of transcriptional activity in the Arabidopsis genome.</title>
        <authorList>
            <person name="Yamada K."/>
            <person name="Lim J."/>
            <person name="Dale J.M."/>
            <person name="Chen H."/>
            <person name="Shinn P."/>
            <person name="Palm C.J."/>
            <person name="Southwick A.M."/>
            <person name="Wu H.C."/>
            <person name="Kim C.J."/>
            <person name="Nguyen M."/>
            <person name="Pham P.K."/>
            <person name="Cheuk R.F."/>
            <person name="Karlin-Newmann G."/>
            <person name="Liu S.X."/>
            <person name="Lam B."/>
            <person name="Sakano H."/>
            <person name="Wu T."/>
            <person name="Yu G."/>
            <person name="Miranda M."/>
            <person name="Quach H.L."/>
            <person name="Tripp M."/>
            <person name="Chang C.H."/>
            <person name="Lee J.M."/>
            <person name="Toriumi M.J."/>
            <person name="Chan M.M."/>
            <person name="Tang C.C."/>
            <person name="Onodera C.S."/>
            <person name="Deng J.M."/>
            <person name="Akiyama K."/>
            <person name="Ansari Y."/>
            <person name="Arakawa T."/>
            <person name="Banh J."/>
            <person name="Banno F."/>
            <person name="Bowser L."/>
            <person name="Brooks S.Y."/>
            <person name="Carninci P."/>
            <person name="Chao Q."/>
            <person name="Choy N."/>
            <person name="Enju A."/>
            <person name="Goldsmith A.D."/>
            <person name="Gurjal M."/>
            <person name="Hansen N.F."/>
            <person name="Hayashizaki Y."/>
            <person name="Johnson-Hopson C."/>
            <person name="Hsuan V.W."/>
            <person name="Iida K."/>
            <person name="Karnes M."/>
            <person name="Khan S."/>
            <person name="Koesema E."/>
            <person name="Ishida J."/>
            <person name="Jiang P.X."/>
            <person name="Jones T."/>
            <person name="Kawai J."/>
            <person name="Kamiya A."/>
            <person name="Meyers C."/>
            <person name="Nakajima M."/>
            <person name="Narusaka M."/>
            <person name="Seki M."/>
            <person name="Sakurai T."/>
            <person name="Satou M."/>
            <person name="Tamse R."/>
            <person name="Vaysberg M."/>
            <person name="Wallender E.K."/>
            <person name="Wong C."/>
            <person name="Yamamura Y."/>
            <person name="Yuan S."/>
            <person name="Shinozaki K."/>
            <person name="Davis R.W."/>
            <person name="Theologis A."/>
            <person name="Ecker J.R."/>
        </authorList>
    </citation>
    <scope>NUCLEOTIDE SEQUENCE [LARGE SCALE MRNA]</scope>
    <source>
        <strain>cv. Columbia</strain>
    </source>
</reference>
<reference key="5">
    <citation type="journal article" date="2001" name="J. Biol. Chem.">
        <title>Phylogenetic analysis of the UDP-glycosyltransferase multigene family of Arabidopsis thaliana.</title>
        <authorList>
            <person name="Li Y."/>
            <person name="Baldauf S."/>
            <person name="Lim E.K."/>
            <person name="Bowles D.J."/>
        </authorList>
    </citation>
    <scope>GENE FAMILY</scope>
</reference>
<reference key="6">
    <citation type="journal article" date="2001" name="J. Biol. Chem.">
        <title>Identification and biochemical characterization of an Arabidopsis indole-3-acetic acid glucosyltransferase.</title>
        <authorList>
            <person name="Jackson R.G."/>
            <person name="Lim E.-K."/>
            <person name="Li Y."/>
            <person name="Kowalczyk M."/>
            <person name="Sandberg G."/>
            <person name="Hoggett J."/>
            <person name="Ashford D.A."/>
            <person name="Bowles D.J."/>
        </authorList>
    </citation>
    <scope>FUNCTION</scope>
</reference>
<reference key="7">
    <citation type="journal article" date="2002" name="J. Biol. Chem.">
        <title>The activity of Arabidopsis glycosyltransferases toward salicylic acid, 4-hydroxybenzoic acid, and other benzoates.</title>
        <authorList>
            <person name="Lim E.K."/>
            <person name="Doucet C.J."/>
            <person name="Li Y."/>
            <person name="Elias L."/>
            <person name="Worrall D."/>
            <person name="Spencer S.P."/>
            <person name="Ross J."/>
            <person name="Bowles D.J."/>
        </authorList>
    </citation>
    <scope>FUNCTION</scope>
</reference>
<reference key="8">
    <citation type="journal article" date="2008" name="J. Biol. Chem.">
        <title>Metabolism of the folate precursor p-aminobenzoate in plants: glucose ester formation and vacuolar storage.</title>
        <authorList>
            <person name="Eudes A."/>
            <person name="Bozzo G.G."/>
            <person name="Waller J.C."/>
            <person name="Naponelli V."/>
            <person name="Lim E.K."/>
            <person name="Bowles D.J."/>
            <person name="Gregory J.F. III"/>
            <person name="Hanson A.D."/>
        </authorList>
    </citation>
    <scope>FUNCTION</scope>
    <scope>BIOPHYSICOCHEMICAL PROPERTIES</scope>
    <scope>DISRUPTION PHENOTYPE</scope>
    <source>
        <strain>cv. Landsberg erecta</strain>
    </source>
</reference>
<feature type="chain" id="PRO_0000334597" description="UDP-glycosyltransferase 75B1">
    <location>
        <begin position="1"/>
        <end position="469"/>
    </location>
</feature>
<feature type="active site" description="Proton acceptor" evidence="1">
    <location>
        <position position="16"/>
    </location>
</feature>
<feature type="binding site" evidence="2">
    <location>
        <position position="16"/>
    </location>
    <ligand>
        <name>an anthocyanidin</name>
        <dbReference type="ChEBI" id="CHEBI:143576"/>
    </ligand>
</feature>
<feature type="binding site" evidence="1">
    <location>
        <position position="334"/>
    </location>
    <ligand>
        <name>UDP-alpha-D-glucose</name>
        <dbReference type="ChEBI" id="CHEBI:58885"/>
    </ligand>
</feature>
<feature type="binding site" evidence="1">
    <location>
        <position position="349"/>
    </location>
    <ligand>
        <name>UDP-alpha-D-glucose</name>
        <dbReference type="ChEBI" id="CHEBI:58885"/>
    </ligand>
</feature>
<feature type="binding site" evidence="1">
    <location>
        <position position="352"/>
    </location>
    <ligand>
        <name>UDP-alpha-D-glucose</name>
        <dbReference type="ChEBI" id="CHEBI:58885"/>
    </ligand>
</feature>
<feature type="binding site" evidence="1">
    <location>
        <position position="354"/>
    </location>
    <ligand>
        <name>UDP-alpha-D-glucose</name>
        <dbReference type="ChEBI" id="CHEBI:58885"/>
    </ligand>
</feature>
<feature type="binding site" evidence="1">
    <location>
        <position position="357"/>
    </location>
    <ligand>
        <name>UDP-alpha-D-glucose</name>
        <dbReference type="ChEBI" id="CHEBI:58885"/>
    </ligand>
</feature>
<feature type="binding site" evidence="1">
    <location>
        <position position="373"/>
    </location>
    <ligand>
        <name>UDP-alpha-D-glucose</name>
        <dbReference type="ChEBI" id="CHEBI:58885"/>
    </ligand>
</feature>
<feature type="binding site" evidence="1">
    <location>
        <position position="374"/>
    </location>
    <ligand>
        <name>UDP-alpha-D-glucose</name>
        <dbReference type="ChEBI" id="CHEBI:58885"/>
    </ligand>
</feature>
<protein>
    <recommendedName>
        <fullName>UDP-glycosyltransferase 75B1</fullName>
        <ecNumber>2.4.1.-</ecNumber>
    </recommendedName>
    <alternativeName>
        <fullName>(Uridine 5'-diphosphate-glucose:indol-3-ylacetyl)-beta-D-glucosyl transferase 1</fullName>
    </alternativeName>
    <alternativeName>
        <fullName>IAA-Glu synthase 1</fullName>
    </alternativeName>
    <alternativeName>
        <fullName>Indole-3-acetate beta-glucosyltransferase 1</fullName>
        <ecNumber>2.4.1.121</ecNumber>
    </alternativeName>
</protein>
<sequence length="469" mass="52813">MAPPHFLLVTFPAQGHVNPSLRFARRLIKRTGARVTFVTCVSVFHNSMIANHNKVENLSFLTFSDGFDDGGISTYEDRQKRSVNLKVNGDKALSDFIEATKNGDSPVTCLIYTILLNWAPKVARRFQLPSALLWIQPALVFNIYYTHFMGNKSVFELPNLSSLEIRDLPSFLTPSNTNKGAYDAFQEMMEFLIKETKPKILINTFDSLEPEALTAFPNIDMVAVGPLLPTEIFSGSTNKSVKDQSSSYTLWLDSKTESSVIYVSFGTMVELSKKQIEELARALIEGKRPFLWVITDKSNRETKTEGEEETEIEKIAGFRHELEEVGMIVSWCSQIEVLSHRAVGCFVTHCGWSSTLESLVLGVPVVAFPMWSDQPTNAKLLEESWKTGVRVRENKDGLVERGEIRRCLEAVMEEKSVELRENAKKWKRLAMEAGREGGSSDKNMEAFVEDICGESLIQNLCEAEEVKVK</sequence>
<gene>
    <name type="primary">UGT75B1</name>
    <name type="synonym">UGT1</name>
    <name type="ordered locus">At1g05560</name>
    <name type="ORF">T25N20.20</name>
</gene>
<evidence type="ECO:0000250" key="1">
    <source>
        <dbReference type="UniProtKB" id="A0A0A1HA03"/>
    </source>
</evidence>
<evidence type="ECO:0000250" key="2">
    <source>
        <dbReference type="UniProtKB" id="P51094"/>
    </source>
</evidence>
<evidence type="ECO:0000269" key="3">
    <source>
    </source>
</evidence>
<evidence type="ECO:0000269" key="4">
    <source>
    </source>
</evidence>
<evidence type="ECO:0000269" key="5">
    <source>
    </source>
</evidence>
<evidence type="ECO:0000269" key="6">
    <source>
    </source>
</evidence>
<evidence type="ECO:0000305" key="7"/>
<organism>
    <name type="scientific">Arabidopsis thaliana</name>
    <name type="common">Mouse-ear cress</name>
    <dbReference type="NCBI Taxonomy" id="3702"/>
    <lineage>
        <taxon>Eukaryota</taxon>
        <taxon>Viridiplantae</taxon>
        <taxon>Streptophyta</taxon>
        <taxon>Embryophyta</taxon>
        <taxon>Tracheophyta</taxon>
        <taxon>Spermatophyta</taxon>
        <taxon>Magnoliopsida</taxon>
        <taxon>eudicotyledons</taxon>
        <taxon>Gunneridae</taxon>
        <taxon>Pentapetalae</taxon>
        <taxon>rosids</taxon>
        <taxon>malvids</taxon>
        <taxon>Brassicales</taxon>
        <taxon>Brassicaceae</taxon>
        <taxon>Camelineae</taxon>
        <taxon>Arabidopsis</taxon>
    </lineage>
</organism>
<accession>Q9LR44</accession>
<dbReference type="EC" id="2.4.1.-"/>
<dbReference type="EC" id="2.4.1.121"/>
<dbReference type="EMBL" id="AF196777">
    <property type="protein sequence ID" value="AAK37839.1"/>
    <property type="molecule type" value="mRNA"/>
</dbReference>
<dbReference type="EMBL" id="AC005106">
    <property type="protein sequence ID" value="AAF79730.1"/>
    <property type="molecule type" value="Genomic_DNA"/>
</dbReference>
<dbReference type="EMBL" id="CP002684">
    <property type="protein sequence ID" value="AEE27854.1"/>
    <property type="molecule type" value="Genomic_DNA"/>
</dbReference>
<dbReference type="EMBL" id="AF367358">
    <property type="protein sequence ID" value="AAK32944.1"/>
    <property type="molecule type" value="mRNA"/>
</dbReference>
<dbReference type="EMBL" id="AY078051">
    <property type="protein sequence ID" value="AAL77752.1"/>
    <property type="molecule type" value="mRNA"/>
</dbReference>
<dbReference type="RefSeq" id="NP_563742.1">
    <property type="nucleotide sequence ID" value="NM_100435.3"/>
</dbReference>
<dbReference type="SMR" id="Q9LR44"/>
<dbReference type="BioGRID" id="22300">
    <property type="interactions" value="1"/>
</dbReference>
<dbReference type="FunCoup" id="Q9LR44">
    <property type="interactions" value="110"/>
</dbReference>
<dbReference type="IntAct" id="Q9LR44">
    <property type="interactions" value="3"/>
</dbReference>
<dbReference type="STRING" id="3702.Q9LR44"/>
<dbReference type="CAZy" id="GT1">
    <property type="family name" value="Glycosyltransferase Family 1"/>
</dbReference>
<dbReference type="MetOSite" id="Q9LR44"/>
<dbReference type="PaxDb" id="3702-AT1G05560.1"/>
<dbReference type="ProteomicsDB" id="228587"/>
<dbReference type="EnsemblPlants" id="AT1G05560.1">
    <property type="protein sequence ID" value="AT1G05560.1"/>
    <property type="gene ID" value="AT1G05560"/>
</dbReference>
<dbReference type="GeneID" id="837058"/>
<dbReference type="Gramene" id="AT1G05560.1">
    <property type="protein sequence ID" value="AT1G05560.1"/>
    <property type="gene ID" value="AT1G05560"/>
</dbReference>
<dbReference type="KEGG" id="ath:AT1G05560"/>
<dbReference type="Araport" id="AT1G05560"/>
<dbReference type="TAIR" id="AT1G05560">
    <property type="gene designation" value="UGT75B1"/>
</dbReference>
<dbReference type="eggNOG" id="KOG1192">
    <property type="taxonomic scope" value="Eukaryota"/>
</dbReference>
<dbReference type="HOGENOM" id="CLU_001724_0_1_1"/>
<dbReference type="InParanoid" id="Q9LR44"/>
<dbReference type="PhylomeDB" id="Q9LR44"/>
<dbReference type="BioCyc" id="ARA:AT1G05560-MONOMER"/>
<dbReference type="BioCyc" id="MetaCyc:AT1G05560-MONOMER"/>
<dbReference type="UniPathway" id="UPA00376"/>
<dbReference type="PRO" id="PR:Q9LR44"/>
<dbReference type="Proteomes" id="UP000006548">
    <property type="component" value="Chromosome 1"/>
</dbReference>
<dbReference type="ExpressionAtlas" id="Q9LR44">
    <property type="expression patterns" value="baseline and differential"/>
</dbReference>
<dbReference type="GO" id="GO:0005856">
    <property type="term" value="C:cytoskeleton"/>
    <property type="evidence" value="ECO:0007669"/>
    <property type="project" value="UniProtKB-KW"/>
</dbReference>
<dbReference type="GO" id="GO:0005794">
    <property type="term" value="C:Golgi apparatus"/>
    <property type="evidence" value="ECO:0000314"/>
    <property type="project" value="TAIR"/>
</dbReference>
<dbReference type="GO" id="GO:0048471">
    <property type="term" value="C:perinuclear region of cytoplasm"/>
    <property type="evidence" value="ECO:0007669"/>
    <property type="project" value="UniProtKB-SubCell"/>
</dbReference>
<dbReference type="GO" id="GO:0009524">
    <property type="term" value="C:phragmoplast"/>
    <property type="evidence" value="ECO:0000314"/>
    <property type="project" value="TAIR"/>
</dbReference>
<dbReference type="GO" id="GO:0047215">
    <property type="term" value="F:indole-3-acetate beta-glucosyltransferase activity"/>
    <property type="evidence" value="ECO:0007669"/>
    <property type="project" value="UniProtKB-EC"/>
</dbReference>
<dbReference type="GO" id="GO:0080002">
    <property type="term" value="F:UDP-glucose:4-aminobenzoate acylglucosyltransferase activity"/>
    <property type="evidence" value="ECO:0000314"/>
    <property type="project" value="TAIR"/>
</dbReference>
<dbReference type="GO" id="GO:0035251">
    <property type="term" value="F:UDP-glucosyltransferase activity"/>
    <property type="evidence" value="ECO:0000314"/>
    <property type="project" value="TAIR"/>
</dbReference>
<dbReference type="GO" id="GO:0008194">
    <property type="term" value="F:UDP-glycosyltransferase activity"/>
    <property type="evidence" value="ECO:0000250"/>
    <property type="project" value="TAIR"/>
</dbReference>
<dbReference type="GO" id="GO:0046482">
    <property type="term" value="P:para-aminobenzoic acid metabolic process"/>
    <property type="evidence" value="ECO:0000314"/>
    <property type="project" value="TAIR"/>
</dbReference>
<dbReference type="GO" id="GO:0009751">
    <property type="term" value="P:response to salicylic acid"/>
    <property type="evidence" value="ECO:0000270"/>
    <property type="project" value="TAIR"/>
</dbReference>
<dbReference type="CDD" id="cd03784">
    <property type="entry name" value="GT1_Gtf-like"/>
    <property type="match status" value="1"/>
</dbReference>
<dbReference type="FunFam" id="3.40.50.2000:FF:000019">
    <property type="entry name" value="Glycosyltransferase"/>
    <property type="match status" value="1"/>
</dbReference>
<dbReference type="Gene3D" id="3.40.50.2000">
    <property type="entry name" value="Glycogen Phosphorylase B"/>
    <property type="match status" value="2"/>
</dbReference>
<dbReference type="InterPro" id="IPR002213">
    <property type="entry name" value="UDP_glucos_trans"/>
</dbReference>
<dbReference type="InterPro" id="IPR035595">
    <property type="entry name" value="UDP_glycos_trans_CS"/>
</dbReference>
<dbReference type="PANTHER" id="PTHR11926">
    <property type="entry name" value="GLUCOSYL/GLUCURONOSYL TRANSFERASES"/>
    <property type="match status" value="1"/>
</dbReference>
<dbReference type="PANTHER" id="PTHR11926:SF870">
    <property type="entry name" value="UDP-GLYCOSYLTRANSFERASE 75B1"/>
    <property type="match status" value="1"/>
</dbReference>
<dbReference type="Pfam" id="PF00201">
    <property type="entry name" value="UDPGT"/>
    <property type="match status" value="1"/>
</dbReference>
<dbReference type="SUPFAM" id="SSF53756">
    <property type="entry name" value="UDP-Glycosyltransferase/glycogen phosphorylase"/>
    <property type="match status" value="1"/>
</dbReference>
<dbReference type="PROSITE" id="PS00375">
    <property type="entry name" value="UDPGT"/>
    <property type="match status" value="1"/>
</dbReference>
<name>U75B1_ARATH</name>
<keyword id="KW-0963">Cytoplasm</keyword>
<keyword id="KW-0206">Cytoskeleton</keyword>
<keyword id="KW-0328">Glycosyltransferase</keyword>
<keyword id="KW-1185">Reference proteome</keyword>
<keyword id="KW-0808">Transferase</keyword>
<comment type="function">
    <text evidence="3 5 6">Possesses low catalytic activity on indole-3-acetic acid (IAA) in vitro. May transfer UDP-glucose from sucrose synthase to callose synthase for the synthesis of callose at the forming cell plate during cytokinesis. Has high affinity for 4-aminobenzoate. Catalyzes the formation of 4-aminobenzoate glucose ester which represents a storage form of 4-aminobenzoate in the vacuole. Is the major source of this activity in the plant. Also active in vitro on benzoates and benzoate derivatives.</text>
</comment>
<comment type="catalytic activity">
    <reaction>
        <text>(indol-3-yl)acetate + UDP-alpha-D-glucose = 1-O-(indol-3-ylacetyl)-beta-D-glucose + UDP</text>
        <dbReference type="Rhea" id="RHEA:14921"/>
        <dbReference type="ChEBI" id="CHEBI:17990"/>
        <dbReference type="ChEBI" id="CHEBI:30854"/>
        <dbReference type="ChEBI" id="CHEBI:58223"/>
        <dbReference type="ChEBI" id="CHEBI:58885"/>
        <dbReference type="EC" id="2.4.1.121"/>
    </reaction>
</comment>
<comment type="biophysicochemical properties">
    <kinetics>
        <KM evidence="6">120 uM for 4-aminobenzoate</KM>
    </kinetics>
</comment>
<comment type="pathway">
    <text>Plant hormone metabolism; auxin conjugation.</text>
</comment>
<comment type="subunit">
    <text evidence="4">Interacts with CALS1, ROP1 and phragmoplastin.</text>
</comment>
<comment type="interaction">
    <interactant intactId="EBI-1765823">
        <id>Q9LR44</id>
    </interactant>
    <interactant intactId="EBI-1765815">
        <id>Q39821</id>
    </interactant>
    <organismsDiffer>true</organismsDiffer>
    <experiments>2</experiments>
</comment>
<comment type="subcellular location">
    <subcellularLocation>
        <location evidence="4">Cytoplasm</location>
        <location evidence="4">Perinuclear region</location>
    </subcellularLocation>
    <subcellularLocation>
        <location evidence="4">Cytoplasm</location>
        <location evidence="4">Cytoskeleton</location>
        <location evidence="4">Phragmoplast</location>
    </subcellularLocation>
    <text>During interphase, distributed in a punctate pattern in the perinuclear region. Localized in the forming cell plate during cytokinesis.</text>
</comment>
<comment type="disruption phenotype">
    <text evidence="6">No visible phenotype under normal growth condition, but strong reduction in 4-aminobenzoate glucosyltransferase activity.</text>
</comment>
<comment type="similarity">
    <text evidence="7">Belongs to the UDP-glycosyltransferase family.</text>
</comment>